<reference key="1">
    <citation type="journal article" date="2005" name="Nucleic Acids Res.">
        <title>Genome dynamics and diversity of Shigella species, the etiologic agents of bacillary dysentery.</title>
        <authorList>
            <person name="Yang F."/>
            <person name="Yang J."/>
            <person name="Zhang X."/>
            <person name="Chen L."/>
            <person name="Jiang Y."/>
            <person name="Yan Y."/>
            <person name="Tang X."/>
            <person name="Wang J."/>
            <person name="Xiong Z."/>
            <person name="Dong J."/>
            <person name="Xue Y."/>
            <person name="Zhu Y."/>
            <person name="Xu X."/>
            <person name="Sun L."/>
            <person name="Chen S."/>
            <person name="Nie H."/>
            <person name="Peng J."/>
            <person name="Xu J."/>
            <person name="Wang Y."/>
            <person name="Yuan Z."/>
            <person name="Wen Y."/>
            <person name="Yao Z."/>
            <person name="Shen Y."/>
            <person name="Qiang B."/>
            <person name="Hou Y."/>
            <person name="Yu J."/>
            <person name="Jin Q."/>
        </authorList>
    </citation>
    <scope>NUCLEOTIDE SEQUENCE [LARGE SCALE GENOMIC DNA]</scope>
    <source>
        <strain>Ss046</strain>
    </source>
</reference>
<sequence>MTEAMKITLSTQPADARWGEKATYSINNDGITLHLNGADDLGLIQRAARKIDGLGIKHVQLSGEGWDADRCWAFWQGYKAPKGTRKVEWPDLDDAQRQELDNRLMIIDWVRDTINAPAEELGPSQLAQRAVDLISNVAGDRVTYRITKGEDLREQGYMGLHTVGRGSERSPVLLALDYNPTGDKEAPVYACLVGKGITFDSGGYSIKQTAFMDSMKSDMGGAATVTGALAFAITRGLNKRVKLFLCCADNLISGNAFKLGDIITYRNGKKVEVMNTDAEGRLVLADGLIDASAQKPEMIIDAATLTGAAKTALGNDYHALFSFDDALAGRLLASASQENEPFWRLPLAEFHRSQLPSNFAELNNTGSAAYPAGASTAAGFLSHFVENYQQGWLHIDCSATYRKAPVEQWSAGATGLGVRTIANLLTA</sequence>
<protein>
    <recommendedName>
        <fullName evidence="1">Peptidase B</fullName>
        <ecNumber evidence="1">3.4.11.23</ecNumber>
    </recommendedName>
    <alternativeName>
        <fullName evidence="1">Aminopeptidase B</fullName>
    </alternativeName>
</protein>
<name>PEPB_SHISS</name>
<comment type="function">
    <text evidence="1">Probably plays an important role in intracellular peptide degradation.</text>
</comment>
<comment type="catalytic activity">
    <reaction evidence="1">
        <text>Release of an N-terminal amino acid, Xaa, from a peptide or arylamide. Xaa is preferably Glu or Asp but may be other amino acids, including Leu, Met, His, Cys and Gln.</text>
        <dbReference type="EC" id="3.4.11.23"/>
    </reaction>
</comment>
<comment type="cofactor">
    <cofactor evidence="1">
        <name>Mn(2+)</name>
        <dbReference type="ChEBI" id="CHEBI:29035"/>
    </cofactor>
    <text evidence="1">Binds 2 manganese ions per subunit.</text>
</comment>
<comment type="subunit">
    <text evidence="1">Homohexamer.</text>
</comment>
<comment type="subcellular location">
    <subcellularLocation>
        <location evidence="1">Cytoplasm</location>
    </subcellularLocation>
</comment>
<comment type="similarity">
    <text evidence="1">Belongs to the peptidase M17 family.</text>
</comment>
<comment type="sequence caution" evidence="2">
    <conflict type="erroneous initiation">
        <sequence resource="EMBL-CDS" id="AAZ89233"/>
    </conflict>
</comment>
<organism>
    <name type="scientific">Shigella sonnei (strain Ss046)</name>
    <dbReference type="NCBI Taxonomy" id="300269"/>
    <lineage>
        <taxon>Bacteria</taxon>
        <taxon>Pseudomonadati</taxon>
        <taxon>Pseudomonadota</taxon>
        <taxon>Gammaproteobacteria</taxon>
        <taxon>Enterobacterales</taxon>
        <taxon>Enterobacteriaceae</taxon>
        <taxon>Shigella</taxon>
    </lineage>
</organism>
<proteinExistence type="inferred from homology"/>
<dbReference type="EC" id="3.4.11.23" evidence="1"/>
<dbReference type="EMBL" id="CP000038">
    <property type="protein sequence ID" value="AAZ89233.1"/>
    <property type="status" value="ALT_INIT"/>
    <property type="molecule type" value="Genomic_DNA"/>
</dbReference>
<dbReference type="RefSeq" id="WP_000133582.1">
    <property type="nucleotide sequence ID" value="NC_007384.1"/>
</dbReference>
<dbReference type="SMR" id="Q3YZ29"/>
<dbReference type="MEROPS" id="M17.004"/>
<dbReference type="GeneID" id="93774613"/>
<dbReference type="KEGG" id="ssn:SSON_2605"/>
<dbReference type="HOGENOM" id="CLU_013734_7_1_6"/>
<dbReference type="Proteomes" id="UP000002529">
    <property type="component" value="Chromosome"/>
</dbReference>
<dbReference type="GO" id="GO:0005737">
    <property type="term" value="C:cytoplasm"/>
    <property type="evidence" value="ECO:0007669"/>
    <property type="project" value="UniProtKB-SubCell"/>
</dbReference>
<dbReference type="GO" id="GO:0030145">
    <property type="term" value="F:manganese ion binding"/>
    <property type="evidence" value="ECO:0007669"/>
    <property type="project" value="UniProtKB-UniRule"/>
</dbReference>
<dbReference type="GO" id="GO:0070006">
    <property type="term" value="F:metalloaminopeptidase activity"/>
    <property type="evidence" value="ECO:0007669"/>
    <property type="project" value="InterPro"/>
</dbReference>
<dbReference type="GO" id="GO:0006508">
    <property type="term" value="P:proteolysis"/>
    <property type="evidence" value="ECO:0007669"/>
    <property type="project" value="UniProtKB-UniRule"/>
</dbReference>
<dbReference type="CDD" id="cd00433">
    <property type="entry name" value="Peptidase_M17"/>
    <property type="match status" value="1"/>
</dbReference>
<dbReference type="FunFam" id="3.40.630.10:FF:000037">
    <property type="entry name" value="Peptidase B"/>
    <property type="match status" value="1"/>
</dbReference>
<dbReference type="Gene3D" id="3.40.630.10">
    <property type="entry name" value="Zn peptidases"/>
    <property type="match status" value="1"/>
</dbReference>
<dbReference type="HAMAP" id="MF_00504">
    <property type="entry name" value="Aminopeptidase_M17"/>
    <property type="match status" value="1"/>
</dbReference>
<dbReference type="InterPro" id="IPR011356">
    <property type="entry name" value="Leucine_aapep/pepB"/>
</dbReference>
<dbReference type="InterPro" id="IPR047620">
    <property type="entry name" value="M17_PepB-like_N"/>
</dbReference>
<dbReference type="InterPro" id="IPR008330">
    <property type="entry name" value="Pept_M17_PepB"/>
</dbReference>
<dbReference type="InterPro" id="IPR000819">
    <property type="entry name" value="Peptidase_M17_C"/>
</dbReference>
<dbReference type="NCBIfam" id="NF003450">
    <property type="entry name" value="PRK05015.1"/>
    <property type="match status" value="1"/>
</dbReference>
<dbReference type="PANTHER" id="PTHR11963">
    <property type="entry name" value="LEUCINE AMINOPEPTIDASE-RELATED"/>
    <property type="match status" value="1"/>
</dbReference>
<dbReference type="PANTHER" id="PTHR11963:SF20">
    <property type="entry name" value="PEPTIDASE B"/>
    <property type="match status" value="1"/>
</dbReference>
<dbReference type="Pfam" id="PF12404">
    <property type="entry name" value="DUF3663"/>
    <property type="match status" value="1"/>
</dbReference>
<dbReference type="Pfam" id="PF00883">
    <property type="entry name" value="Peptidase_M17"/>
    <property type="match status" value="1"/>
</dbReference>
<dbReference type="PIRSF" id="PIRSF036388">
    <property type="entry name" value="Ctsl_amnpptdse_B"/>
    <property type="match status" value="1"/>
</dbReference>
<dbReference type="PRINTS" id="PR00481">
    <property type="entry name" value="LAMNOPPTDASE"/>
</dbReference>
<dbReference type="SUPFAM" id="SSF53187">
    <property type="entry name" value="Zn-dependent exopeptidases"/>
    <property type="match status" value="1"/>
</dbReference>
<dbReference type="PROSITE" id="PS00631">
    <property type="entry name" value="CYTOSOL_AP"/>
    <property type="match status" value="1"/>
</dbReference>
<gene>
    <name evidence="1" type="primary">pepB</name>
    <name type="ordered locus">SSON_2605</name>
</gene>
<evidence type="ECO:0000255" key="1">
    <source>
        <dbReference type="HAMAP-Rule" id="MF_00504"/>
    </source>
</evidence>
<evidence type="ECO:0000305" key="2"/>
<feature type="chain" id="PRO_0000165846" description="Peptidase B">
    <location>
        <begin position="1"/>
        <end position="427"/>
    </location>
</feature>
<feature type="active site" evidence="1">
    <location>
        <position position="207"/>
    </location>
</feature>
<feature type="active site" evidence="1">
    <location>
        <position position="281"/>
    </location>
</feature>
<feature type="binding site" evidence="1">
    <location>
        <position position="195"/>
    </location>
    <ligand>
        <name>Mn(2+)</name>
        <dbReference type="ChEBI" id="CHEBI:29035"/>
        <label>2</label>
    </ligand>
</feature>
<feature type="binding site" evidence="1">
    <location>
        <position position="200"/>
    </location>
    <ligand>
        <name>Mn(2+)</name>
        <dbReference type="ChEBI" id="CHEBI:29035"/>
        <label>1</label>
    </ligand>
</feature>
<feature type="binding site" evidence="1">
    <location>
        <position position="200"/>
    </location>
    <ligand>
        <name>Mn(2+)</name>
        <dbReference type="ChEBI" id="CHEBI:29035"/>
        <label>2</label>
    </ligand>
</feature>
<feature type="binding site" evidence="1">
    <location>
        <position position="218"/>
    </location>
    <ligand>
        <name>Mn(2+)</name>
        <dbReference type="ChEBI" id="CHEBI:29035"/>
        <label>2</label>
    </ligand>
</feature>
<feature type="binding site" evidence="1">
    <location>
        <position position="277"/>
    </location>
    <ligand>
        <name>Mn(2+)</name>
        <dbReference type="ChEBI" id="CHEBI:29035"/>
        <label>1</label>
    </ligand>
</feature>
<feature type="binding site" evidence="1">
    <location>
        <position position="279"/>
    </location>
    <ligand>
        <name>Mn(2+)</name>
        <dbReference type="ChEBI" id="CHEBI:29035"/>
        <label>1</label>
    </ligand>
</feature>
<feature type="binding site" evidence="1">
    <location>
        <position position="279"/>
    </location>
    <ligand>
        <name>Mn(2+)</name>
        <dbReference type="ChEBI" id="CHEBI:29035"/>
        <label>2</label>
    </ligand>
</feature>
<accession>Q3YZ29</accession>
<keyword id="KW-0031">Aminopeptidase</keyword>
<keyword id="KW-0963">Cytoplasm</keyword>
<keyword id="KW-0378">Hydrolase</keyword>
<keyword id="KW-0464">Manganese</keyword>
<keyword id="KW-0479">Metal-binding</keyword>
<keyword id="KW-0645">Protease</keyword>
<keyword id="KW-1185">Reference proteome</keyword>